<name>PTH_SYNC1</name>
<organism>
    <name type="scientific">Syntrophotalea carbinolica (strain DSM 2380 / NBRC 103641 / GraBd1)</name>
    <name type="common">Pelobacter carbinolicus</name>
    <dbReference type="NCBI Taxonomy" id="338963"/>
    <lineage>
        <taxon>Bacteria</taxon>
        <taxon>Pseudomonadati</taxon>
        <taxon>Thermodesulfobacteriota</taxon>
        <taxon>Desulfuromonadia</taxon>
        <taxon>Desulfuromonadales</taxon>
        <taxon>Syntrophotaleaceae</taxon>
        <taxon>Syntrophotalea</taxon>
    </lineage>
</organism>
<accession>Q3A314</accession>
<proteinExistence type="inferred from homology"/>
<feature type="chain" id="PRO_0000264072" description="Peptidyl-tRNA hydrolase">
    <location>
        <begin position="1"/>
        <end position="191"/>
    </location>
</feature>
<feature type="active site" description="Proton acceptor" evidence="1">
    <location>
        <position position="19"/>
    </location>
</feature>
<feature type="binding site" evidence="1">
    <location>
        <position position="14"/>
    </location>
    <ligand>
        <name>tRNA</name>
        <dbReference type="ChEBI" id="CHEBI:17843"/>
    </ligand>
</feature>
<feature type="binding site" evidence="1">
    <location>
        <position position="64"/>
    </location>
    <ligand>
        <name>tRNA</name>
        <dbReference type="ChEBI" id="CHEBI:17843"/>
    </ligand>
</feature>
<feature type="binding site" evidence="1">
    <location>
        <position position="66"/>
    </location>
    <ligand>
        <name>tRNA</name>
        <dbReference type="ChEBI" id="CHEBI:17843"/>
    </ligand>
</feature>
<feature type="binding site" evidence="1">
    <location>
        <position position="112"/>
    </location>
    <ligand>
        <name>tRNA</name>
        <dbReference type="ChEBI" id="CHEBI:17843"/>
    </ligand>
</feature>
<feature type="site" description="Discriminates between blocked and unblocked aminoacyl-tRNA" evidence="1">
    <location>
        <position position="9"/>
    </location>
</feature>
<feature type="site" description="Stabilizes the basic form of H active site to accept a proton" evidence="1">
    <location>
        <position position="91"/>
    </location>
</feature>
<comment type="function">
    <text evidence="1">Hydrolyzes ribosome-free peptidyl-tRNAs (with 1 or more amino acids incorporated), which drop off the ribosome during protein synthesis, or as a result of ribosome stalling.</text>
</comment>
<comment type="function">
    <text evidence="1">Catalyzes the release of premature peptidyl moieties from peptidyl-tRNA molecules trapped in stalled 50S ribosomal subunits, and thus maintains levels of free tRNAs and 50S ribosomes.</text>
</comment>
<comment type="catalytic activity">
    <reaction evidence="1">
        <text>an N-acyl-L-alpha-aminoacyl-tRNA + H2O = an N-acyl-L-amino acid + a tRNA + H(+)</text>
        <dbReference type="Rhea" id="RHEA:54448"/>
        <dbReference type="Rhea" id="RHEA-COMP:10123"/>
        <dbReference type="Rhea" id="RHEA-COMP:13883"/>
        <dbReference type="ChEBI" id="CHEBI:15377"/>
        <dbReference type="ChEBI" id="CHEBI:15378"/>
        <dbReference type="ChEBI" id="CHEBI:59874"/>
        <dbReference type="ChEBI" id="CHEBI:78442"/>
        <dbReference type="ChEBI" id="CHEBI:138191"/>
        <dbReference type="EC" id="3.1.1.29"/>
    </reaction>
</comment>
<comment type="subunit">
    <text evidence="1">Monomer.</text>
</comment>
<comment type="subcellular location">
    <subcellularLocation>
        <location evidence="1">Cytoplasm</location>
    </subcellularLocation>
</comment>
<comment type="similarity">
    <text evidence="1">Belongs to the PTH family.</text>
</comment>
<keyword id="KW-0963">Cytoplasm</keyword>
<keyword id="KW-0378">Hydrolase</keyword>
<keyword id="KW-1185">Reference proteome</keyword>
<keyword id="KW-0694">RNA-binding</keyword>
<keyword id="KW-0820">tRNA-binding</keyword>
<gene>
    <name evidence="1" type="primary">pth</name>
    <name type="ordered locus">Pcar_2002</name>
</gene>
<sequence length="191" mass="20623">MKLVVGLGNPGPEYAATRHNIGFLVAQKFAQQMGVSLKRQAYQGIVGTGRADGQETMVLLPQTYMNRSGVSVVSACKSKGIAVEDVVVIHDEIDLPFGSIRIKVGGGHGGHNGLRSIVDLLGCRDFLRVRMGVGRPQGQVDVAKYVLGQFSSTEKSQLDNVLENSVKALEVLLQKGAQQAMNEFNNRVFLI</sequence>
<reference key="1">
    <citation type="submission" date="2005-10" db="EMBL/GenBank/DDBJ databases">
        <title>Complete sequence of Pelobacter carbinolicus DSM 2380.</title>
        <authorList>
            <person name="Copeland A."/>
            <person name="Lucas S."/>
            <person name="Lapidus A."/>
            <person name="Barry K."/>
            <person name="Detter J.C."/>
            <person name="Glavina T."/>
            <person name="Hammon N."/>
            <person name="Israni S."/>
            <person name="Pitluck S."/>
            <person name="Chertkov O."/>
            <person name="Schmutz J."/>
            <person name="Larimer F."/>
            <person name="Land M."/>
            <person name="Kyrpides N."/>
            <person name="Ivanova N."/>
            <person name="Richardson P."/>
        </authorList>
    </citation>
    <scope>NUCLEOTIDE SEQUENCE [LARGE SCALE GENOMIC DNA]</scope>
    <source>
        <strain>DSM 2380 / NBRC 103641 / GraBd1</strain>
    </source>
</reference>
<protein>
    <recommendedName>
        <fullName evidence="1">Peptidyl-tRNA hydrolase</fullName>
        <shortName evidence="1">Pth</shortName>
        <ecNumber evidence="1">3.1.1.29</ecNumber>
    </recommendedName>
</protein>
<dbReference type="EC" id="3.1.1.29" evidence="1"/>
<dbReference type="EMBL" id="CP000142">
    <property type="protein sequence ID" value="ABA89243.1"/>
    <property type="molecule type" value="Genomic_DNA"/>
</dbReference>
<dbReference type="SMR" id="Q3A314"/>
<dbReference type="STRING" id="338963.Pcar_2002"/>
<dbReference type="KEGG" id="pca:Pcar_2002"/>
<dbReference type="eggNOG" id="COG0193">
    <property type="taxonomic scope" value="Bacteria"/>
</dbReference>
<dbReference type="HOGENOM" id="CLU_062456_4_1_7"/>
<dbReference type="OrthoDB" id="9800507at2"/>
<dbReference type="Proteomes" id="UP000002534">
    <property type="component" value="Chromosome"/>
</dbReference>
<dbReference type="GO" id="GO:0005737">
    <property type="term" value="C:cytoplasm"/>
    <property type="evidence" value="ECO:0007669"/>
    <property type="project" value="UniProtKB-SubCell"/>
</dbReference>
<dbReference type="GO" id="GO:0004045">
    <property type="term" value="F:peptidyl-tRNA hydrolase activity"/>
    <property type="evidence" value="ECO:0007669"/>
    <property type="project" value="UniProtKB-UniRule"/>
</dbReference>
<dbReference type="GO" id="GO:0000049">
    <property type="term" value="F:tRNA binding"/>
    <property type="evidence" value="ECO:0007669"/>
    <property type="project" value="UniProtKB-UniRule"/>
</dbReference>
<dbReference type="GO" id="GO:0006515">
    <property type="term" value="P:protein quality control for misfolded or incompletely synthesized proteins"/>
    <property type="evidence" value="ECO:0007669"/>
    <property type="project" value="UniProtKB-UniRule"/>
</dbReference>
<dbReference type="GO" id="GO:0072344">
    <property type="term" value="P:rescue of stalled ribosome"/>
    <property type="evidence" value="ECO:0007669"/>
    <property type="project" value="UniProtKB-UniRule"/>
</dbReference>
<dbReference type="CDD" id="cd00462">
    <property type="entry name" value="PTH"/>
    <property type="match status" value="1"/>
</dbReference>
<dbReference type="FunFam" id="3.40.50.1470:FF:000001">
    <property type="entry name" value="Peptidyl-tRNA hydrolase"/>
    <property type="match status" value="1"/>
</dbReference>
<dbReference type="Gene3D" id="3.40.50.1470">
    <property type="entry name" value="Peptidyl-tRNA hydrolase"/>
    <property type="match status" value="1"/>
</dbReference>
<dbReference type="HAMAP" id="MF_00083">
    <property type="entry name" value="Pept_tRNA_hydro_bact"/>
    <property type="match status" value="1"/>
</dbReference>
<dbReference type="InterPro" id="IPR001328">
    <property type="entry name" value="Pept_tRNA_hydro"/>
</dbReference>
<dbReference type="InterPro" id="IPR018171">
    <property type="entry name" value="Pept_tRNA_hydro_CS"/>
</dbReference>
<dbReference type="InterPro" id="IPR036416">
    <property type="entry name" value="Pept_tRNA_hydro_sf"/>
</dbReference>
<dbReference type="NCBIfam" id="TIGR00447">
    <property type="entry name" value="pth"/>
    <property type="match status" value="1"/>
</dbReference>
<dbReference type="PANTHER" id="PTHR17224">
    <property type="entry name" value="PEPTIDYL-TRNA HYDROLASE"/>
    <property type="match status" value="1"/>
</dbReference>
<dbReference type="PANTHER" id="PTHR17224:SF1">
    <property type="entry name" value="PEPTIDYL-TRNA HYDROLASE"/>
    <property type="match status" value="1"/>
</dbReference>
<dbReference type="Pfam" id="PF01195">
    <property type="entry name" value="Pept_tRNA_hydro"/>
    <property type="match status" value="1"/>
</dbReference>
<dbReference type="SUPFAM" id="SSF53178">
    <property type="entry name" value="Peptidyl-tRNA hydrolase-like"/>
    <property type="match status" value="1"/>
</dbReference>
<dbReference type="PROSITE" id="PS01196">
    <property type="entry name" value="PEPT_TRNA_HYDROL_2"/>
    <property type="match status" value="1"/>
</dbReference>
<evidence type="ECO:0000255" key="1">
    <source>
        <dbReference type="HAMAP-Rule" id="MF_00083"/>
    </source>
</evidence>